<comment type="function">
    <text evidence="1">Member of the two-component regulatory system DcuR/DcuS. Involved in the C4-dicarboxylate-stimulated regulation of the genes encoding the anaerobic fumarate respiratory system (frdABCD; nuoAN; dcuB; sdhCDAB; etc.). Weakly regulates the aerobic C4-dicarboxylate transporter dctA. Activates DcuR by phosphorylation.</text>
</comment>
<comment type="catalytic activity">
    <reaction evidence="1">
        <text>ATP + protein L-histidine = ADP + protein N-phospho-L-histidine.</text>
        <dbReference type="EC" id="2.7.13.3"/>
    </reaction>
</comment>
<comment type="subunit">
    <text evidence="1">Homodimer.</text>
</comment>
<comment type="subcellular location">
    <subcellularLocation>
        <location evidence="1">Cell inner membrane</location>
        <topology evidence="2">Multi-pass membrane protein</topology>
    </subcellularLocation>
</comment>
<comment type="domain">
    <text evidence="1">The periplasmic domain is involved in C4-dicarboxylate binding and sensing. The structural disorder in the cytoplasmic PAS domain has an important role in signal transduction to the kinase domain and may be the decisive structural feature that characterizes the activated kinase.</text>
</comment>
<comment type="PTM">
    <text evidence="1">Autophosphorylated. The phosphoryl group is rapidly transferred to DcuR.</text>
</comment>
<protein>
    <recommendedName>
        <fullName evidence="1">Sensor histidine kinase DcuS</fullName>
        <ecNumber evidence="1">2.7.13.3</ecNumber>
    </recommendedName>
</protein>
<proteinExistence type="inferred from homology"/>
<organism>
    <name type="scientific">Escherichia coli O157:H7</name>
    <dbReference type="NCBI Taxonomy" id="83334"/>
    <lineage>
        <taxon>Bacteria</taxon>
        <taxon>Pseudomonadati</taxon>
        <taxon>Pseudomonadota</taxon>
        <taxon>Gammaproteobacteria</taxon>
        <taxon>Enterobacterales</taxon>
        <taxon>Enterobacteriaceae</taxon>
        <taxon>Escherichia</taxon>
    </lineage>
</organism>
<feature type="chain" id="PRO_0000074751" description="Sensor histidine kinase DcuS">
    <location>
        <begin position="1"/>
        <end position="543"/>
    </location>
</feature>
<feature type="topological domain" description="Cytoplasmic" evidence="1">
    <location>
        <begin position="1"/>
        <end position="20"/>
    </location>
</feature>
<feature type="transmembrane region" description="Helical" evidence="2">
    <location>
        <begin position="21"/>
        <end position="41"/>
    </location>
</feature>
<feature type="topological domain" description="Periplasmic" evidence="1">
    <location>
        <begin position="42"/>
        <end position="181"/>
    </location>
</feature>
<feature type="transmembrane region" description="Helical" evidence="2">
    <location>
        <begin position="182"/>
        <end position="202"/>
    </location>
</feature>
<feature type="topological domain" description="Cytoplasmic" evidence="1">
    <location>
        <begin position="203"/>
        <end position="543"/>
    </location>
</feature>
<feature type="domain" description="PAS" evidence="4">
    <location>
        <begin position="212"/>
        <end position="323"/>
    </location>
</feature>
<feature type="domain" description="Histidine kinase" evidence="3">
    <location>
        <begin position="346"/>
        <end position="538"/>
    </location>
</feature>
<feature type="binding site" evidence="1">
    <location>
        <begin position="107"/>
        <end position="110"/>
    </location>
    <ligand>
        <name>(R)-malate</name>
        <dbReference type="ChEBI" id="CHEBI:15588"/>
    </ligand>
</feature>
<feature type="binding site" evidence="1">
    <location>
        <position position="121"/>
    </location>
    <ligand>
        <name>(R)-malate</name>
        <dbReference type="ChEBI" id="CHEBI:15588"/>
    </ligand>
</feature>
<feature type="binding site" evidence="1">
    <location>
        <begin position="140"/>
        <end position="142"/>
    </location>
    <ligand>
        <name>(R)-malate</name>
        <dbReference type="ChEBI" id="CHEBI:15588"/>
    </ligand>
</feature>
<feature type="binding site" evidence="1">
    <location>
        <position position="147"/>
    </location>
    <ligand>
        <name>(R)-malate</name>
        <dbReference type="ChEBI" id="CHEBI:15588"/>
    </ligand>
</feature>
<feature type="modified residue" description="Phosphohistidine; by autocatalysis" evidence="3">
    <location>
        <position position="349"/>
    </location>
</feature>
<reference key="1">
    <citation type="journal article" date="2001" name="Nature">
        <title>Genome sequence of enterohaemorrhagic Escherichia coli O157:H7.</title>
        <authorList>
            <person name="Perna N.T."/>
            <person name="Plunkett G. III"/>
            <person name="Burland V."/>
            <person name="Mau B."/>
            <person name="Glasner J.D."/>
            <person name="Rose D.J."/>
            <person name="Mayhew G.F."/>
            <person name="Evans P.S."/>
            <person name="Gregor J."/>
            <person name="Kirkpatrick H.A."/>
            <person name="Posfai G."/>
            <person name="Hackett J."/>
            <person name="Klink S."/>
            <person name="Boutin A."/>
            <person name="Shao Y."/>
            <person name="Miller L."/>
            <person name="Grotbeck E.J."/>
            <person name="Davis N.W."/>
            <person name="Lim A."/>
            <person name="Dimalanta E.T."/>
            <person name="Potamousis K."/>
            <person name="Apodaca J."/>
            <person name="Anantharaman T.S."/>
            <person name="Lin J."/>
            <person name="Yen G."/>
            <person name="Schwartz D.C."/>
            <person name="Welch R.A."/>
            <person name="Blattner F.R."/>
        </authorList>
    </citation>
    <scope>NUCLEOTIDE SEQUENCE [LARGE SCALE GENOMIC DNA]</scope>
    <source>
        <strain>O157:H7 / EDL933 / ATCC 700927 / EHEC</strain>
    </source>
</reference>
<reference key="2">
    <citation type="journal article" date="2001" name="DNA Res.">
        <title>Complete genome sequence of enterohemorrhagic Escherichia coli O157:H7 and genomic comparison with a laboratory strain K-12.</title>
        <authorList>
            <person name="Hayashi T."/>
            <person name="Makino K."/>
            <person name="Ohnishi M."/>
            <person name="Kurokawa K."/>
            <person name="Ishii K."/>
            <person name="Yokoyama K."/>
            <person name="Han C.-G."/>
            <person name="Ohtsubo E."/>
            <person name="Nakayama K."/>
            <person name="Murata T."/>
            <person name="Tanaka M."/>
            <person name="Tobe T."/>
            <person name="Iida T."/>
            <person name="Takami H."/>
            <person name="Honda T."/>
            <person name="Sasakawa C."/>
            <person name="Ogasawara N."/>
            <person name="Yasunaga T."/>
            <person name="Kuhara S."/>
            <person name="Shiba T."/>
            <person name="Hattori M."/>
            <person name="Shinagawa H."/>
        </authorList>
    </citation>
    <scope>NUCLEOTIDE SEQUENCE [LARGE SCALE GENOMIC DNA]</scope>
    <source>
        <strain>O157:H7 / Sakai / RIMD 0509952 / EHEC</strain>
    </source>
</reference>
<name>DCUS_ECO57</name>
<dbReference type="EC" id="2.7.13.3" evidence="1"/>
<dbReference type="EMBL" id="AE005174">
    <property type="protein sequence ID" value="AAG59324.1"/>
    <property type="molecule type" value="Genomic_DNA"/>
</dbReference>
<dbReference type="EMBL" id="BA000007">
    <property type="protein sequence ID" value="BAB38530.1"/>
    <property type="molecule type" value="Genomic_DNA"/>
</dbReference>
<dbReference type="PIR" id="C91267">
    <property type="entry name" value="C91267"/>
</dbReference>
<dbReference type="PIR" id="H86107">
    <property type="entry name" value="H86107"/>
</dbReference>
<dbReference type="RefSeq" id="NP_313134.1">
    <property type="nucleotide sequence ID" value="NC_002695.1"/>
</dbReference>
<dbReference type="RefSeq" id="WP_001216477.1">
    <property type="nucleotide sequence ID" value="NZ_VOAI01000008.1"/>
</dbReference>
<dbReference type="BMRB" id="P0AEC9"/>
<dbReference type="SMR" id="P0AEC9"/>
<dbReference type="STRING" id="155864.Z5727"/>
<dbReference type="GeneID" id="914212"/>
<dbReference type="KEGG" id="ece:Z5727"/>
<dbReference type="KEGG" id="ecs:ECs_5107"/>
<dbReference type="PATRIC" id="fig|386585.9.peg.5337"/>
<dbReference type="eggNOG" id="COG3290">
    <property type="taxonomic scope" value="Bacteria"/>
</dbReference>
<dbReference type="HOGENOM" id="CLU_020211_11_2_6"/>
<dbReference type="OMA" id="HYQNGWL"/>
<dbReference type="Proteomes" id="UP000000558">
    <property type="component" value="Chromosome"/>
</dbReference>
<dbReference type="Proteomes" id="UP000002519">
    <property type="component" value="Chromosome"/>
</dbReference>
<dbReference type="GO" id="GO:0005886">
    <property type="term" value="C:plasma membrane"/>
    <property type="evidence" value="ECO:0007669"/>
    <property type="project" value="UniProtKB-SubCell"/>
</dbReference>
<dbReference type="GO" id="GO:0005524">
    <property type="term" value="F:ATP binding"/>
    <property type="evidence" value="ECO:0007669"/>
    <property type="project" value="UniProtKB-KW"/>
</dbReference>
<dbReference type="GO" id="GO:0000155">
    <property type="term" value="F:phosphorelay sensor kinase activity"/>
    <property type="evidence" value="ECO:0007669"/>
    <property type="project" value="InterPro"/>
</dbReference>
<dbReference type="GO" id="GO:0006355">
    <property type="term" value="P:regulation of DNA-templated transcription"/>
    <property type="evidence" value="ECO:0007669"/>
    <property type="project" value="InterPro"/>
</dbReference>
<dbReference type="CDD" id="cd16915">
    <property type="entry name" value="HATPase_DpiB-CitA-like"/>
    <property type="match status" value="1"/>
</dbReference>
<dbReference type="CDD" id="cd00130">
    <property type="entry name" value="PAS"/>
    <property type="match status" value="1"/>
</dbReference>
<dbReference type="FunFam" id="1.10.287.130:FF:000011">
    <property type="entry name" value="Sensor histidine kinase DcuS"/>
    <property type="match status" value="1"/>
</dbReference>
<dbReference type="FunFam" id="3.30.450.20:FF:000018">
    <property type="entry name" value="Sensor histidine kinase DcuS"/>
    <property type="match status" value="1"/>
</dbReference>
<dbReference type="FunFam" id="3.30.450.20:FF:000045">
    <property type="entry name" value="Sensor histidine kinase DcuS"/>
    <property type="match status" value="1"/>
</dbReference>
<dbReference type="FunFam" id="3.30.565.10:FF:000041">
    <property type="entry name" value="Sensor histidine kinase DcuS"/>
    <property type="match status" value="1"/>
</dbReference>
<dbReference type="Gene3D" id="1.10.287.130">
    <property type="match status" value="1"/>
</dbReference>
<dbReference type="Gene3D" id="3.30.565.10">
    <property type="entry name" value="Histidine kinase-like ATPase, C-terminal domain"/>
    <property type="match status" value="1"/>
</dbReference>
<dbReference type="Gene3D" id="3.30.450.20">
    <property type="entry name" value="PAS domain"/>
    <property type="match status" value="2"/>
</dbReference>
<dbReference type="InterPro" id="IPR036890">
    <property type="entry name" value="HATPase_C_sf"/>
</dbReference>
<dbReference type="InterPro" id="IPR005467">
    <property type="entry name" value="His_kinase_dom"/>
</dbReference>
<dbReference type="InterPro" id="IPR000014">
    <property type="entry name" value="PAS"/>
</dbReference>
<dbReference type="InterPro" id="IPR035965">
    <property type="entry name" value="PAS-like_dom_sf"/>
</dbReference>
<dbReference type="InterPro" id="IPR013767">
    <property type="entry name" value="PAS_fold"/>
</dbReference>
<dbReference type="InterPro" id="IPR033463">
    <property type="entry name" value="sCache_3"/>
</dbReference>
<dbReference type="InterPro" id="IPR029151">
    <property type="entry name" value="Sensor-like_sf"/>
</dbReference>
<dbReference type="InterPro" id="IPR004358">
    <property type="entry name" value="Sig_transdc_His_kin-like_C"/>
</dbReference>
<dbReference type="InterPro" id="IPR016120">
    <property type="entry name" value="Sig_transdc_His_kin_SpoOB"/>
</dbReference>
<dbReference type="InterPro" id="IPR039506">
    <property type="entry name" value="SPOB_a"/>
</dbReference>
<dbReference type="NCBIfam" id="NF008298">
    <property type="entry name" value="PRK11086.1"/>
    <property type="match status" value="1"/>
</dbReference>
<dbReference type="PANTHER" id="PTHR43547:SF10">
    <property type="entry name" value="SENSOR HISTIDINE KINASE DCUS"/>
    <property type="match status" value="1"/>
</dbReference>
<dbReference type="PANTHER" id="PTHR43547">
    <property type="entry name" value="TWO-COMPONENT HISTIDINE KINASE"/>
    <property type="match status" value="1"/>
</dbReference>
<dbReference type="Pfam" id="PF02518">
    <property type="entry name" value="HATPase_c"/>
    <property type="match status" value="1"/>
</dbReference>
<dbReference type="Pfam" id="PF00989">
    <property type="entry name" value="PAS"/>
    <property type="match status" value="1"/>
</dbReference>
<dbReference type="Pfam" id="PF17203">
    <property type="entry name" value="sCache_3_2"/>
    <property type="match status" value="1"/>
</dbReference>
<dbReference type="Pfam" id="PF14689">
    <property type="entry name" value="SPOB_a"/>
    <property type="match status" value="1"/>
</dbReference>
<dbReference type="PRINTS" id="PR00344">
    <property type="entry name" value="BCTRLSENSOR"/>
</dbReference>
<dbReference type="SMART" id="SM00387">
    <property type="entry name" value="HATPase_c"/>
    <property type="match status" value="1"/>
</dbReference>
<dbReference type="SMART" id="SM00091">
    <property type="entry name" value="PAS"/>
    <property type="match status" value="1"/>
</dbReference>
<dbReference type="SUPFAM" id="SSF55874">
    <property type="entry name" value="ATPase domain of HSP90 chaperone/DNA topoisomerase II/histidine kinase"/>
    <property type="match status" value="1"/>
</dbReference>
<dbReference type="SUPFAM" id="SSF55785">
    <property type="entry name" value="PYP-like sensor domain (PAS domain)"/>
    <property type="match status" value="1"/>
</dbReference>
<dbReference type="SUPFAM" id="SSF103190">
    <property type="entry name" value="Sensory domain-like"/>
    <property type="match status" value="1"/>
</dbReference>
<dbReference type="SUPFAM" id="SSF55890">
    <property type="entry name" value="Sporulation response regulatory protein Spo0B"/>
    <property type="match status" value="1"/>
</dbReference>
<dbReference type="PROSITE" id="PS50109">
    <property type="entry name" value="HIS_KIN"/>
    <property type="match status" value="1"/>
</dbReference>
<dbReference type="PROSITE" id="PS50112">
    <property type="entry name" value="PAS"/>
    <property type="match status" value="1"/>
</dbReference>
<accession>P0AEC9</accession>
<accession>P39272</accession>
<accession>P76795</accession>
<keyword id="KW-0067">ATP-binding</keyword>
<keyword id="KW-0997">Cell inner membrane</keyword>
<keyword id="KW-1003">Cell membrane</keyword>
<keyword id="KW-0418">Kinase</keyword>
<keyword id="KW-0472">Membrane</keyword>
<keyword id="KW-0547">Nucleotide-binding</keyword>
<keyword id="KW-0597">Phosphoprotein</keyword>
<keyword id="KW-1185">Reference proteome</keyword>
<keyword id="KW-0808">Transferase</keyword>
<keyword id="KW-0812">Transmembrane</keyword>
<keyword id="KW-1133">Transmembrane helix</keyword>
<keyword id="KW-0902">Two-component regulatory system</keyword>
<evidence type="ECO:0000250" key="1">
    <source>
        <dbReference type="UniProtKB" id="P0AEC8"/>
    </source>
</evidence>
<evidence type="ECO:0000255" key="2"/>
<evidence type="ECO:0000255" key="3">
    <source>
        <dbReference type="PROSITE-ProRule" id="PRU00107"/>
    </source>
</evidence>
<evidence type="ECO:0000255" key="4">
    <source>
        <dbReference type="PROSITE-ProRule" id="PRU00140"/>
    </source>
</evidence>
<sequence>MRHSLPYRMLRKRPMKLSTTVILMVSAVLFSVLLVVHLIYFSQISDMTRDGLANKALAVARTLADSPEIRQGLQKKPQESGIQAIAEAVRKRNDLLFIVVTDMQSLRYSHPEAQRIGQPFKGDDILKALNGEENVAINRGFLAQALRVFTPIYDENHKQIGVVAIGLELSRVTQQINDSRWSIIWSVLFGMLVGLIGTCILVKVLKKILFGLEPYEISTLFEQRQAMLQSIKEGVVAVDDRGEVTLINDAAQELLNYRKSQDDEKLSTLSHSWSQVVDVSEVLRDGTPRRDEEITIKDRLLLINTVPVRSNGVIIGAISTFRDKTEVRKLMQRLDGLVNYADALRERSHEFMNKLHVILGLLHLKSYKQLEDYILKTANNYQEEIGSLLGKIKSPVIAGFLISKINRATDLGHTLILNSESQLPDSGSEDQVATLITTLGNLIENALEALGPEPGGEISVTLHYRHGWLHCEVNDDGPGIAPDKIDHIFDKGVSTKGSERGVGLALVKQQVENLGGSIAVESEPGIFTQFFVQIPWDGERSNR</sequence>
<gene>
    <name type="primary">dcuS</name>
    <name type="ordered locus">Z5727</name>
    <name type="ordered locus">ECs5107</name>
</gene>